<comment type="function">
    <text evidence="1">Specifically methylates the pseudouridine at position 1915 (m3Psi1915) in 23S rRNA.</text>
</comment>
<comment type="catalytic activity">
    <reaction evidence="1">
        <text>pseudouridine(1915) in 23S rRNA + S-adenosyl-L-methionine = N(3)-methylpseudouridine(1915) in 23S rRNA + S-adenosyl-L-homocysteine + H(+)</text>
        <dbReference type="Rhea" id="RHEA:42752"/>
        <dbReference type="Rhea" id="RHEA-COMP:10221"/>
        <dbReference type="Rhea" id="RHEA-COMP:10222"/>
        <dbReference type="ChEBI" id="CHEBI:15378"/>
        <dbReference type="ChEBI" id="CHEBI:57856"/>
        <dbReference type="ChEBI" id="CHEBI:59789"/>
        <dbReference type="ChEBI" id="CHEBI:65314"/>
        <dbReference type="ChEBI" id="CHEBI:74486"/>
        <dbReference type="EC" id="2.1.1.177"/>
    </reaction>
</comment>
<comment type="subunit">
    <text evidence="1">Homodimer.</text>
</comment>
<comment type="subcellular location">
    <subcellularLocation>
        <location evidence="1">Cytoplasm</location>
    </subcellularLocation>
</comment>
<comment type="similarity">
    <text evidence="1">Belongs to the RNA methyltransferase RlmH family.</text>
</comment>
<keyword id="KW-0963">Cytoplasm</keyword>
<keyword id="KW-0489">Methyltransferase</keyword>
<keyword id="KW-1185">Reference proteome</keyword>
<keyword id="KW-0698">rRNA processing</keyword>
<keyword id="KW-0949">S-adenosyl-L-methionine</keyword>
<keyword id="KW-0808">Transferase</keyword>
<evidence type="ECO:0000255" key="1">
    <source>
        <dbReference type="HAMAP-Rule" id="MF_00658"/>
    </source>
</evidence>
<gene>
    <name evidence="1" type="primary">rlmH</name>
    <name type="ordered locus">STM0641</name>
</gene>
<organism>
    <name type="scientific">Salmonella typhimurium (strain LT2 / SGSC1412 / ATCC 700720)</name>
    <dbReference type="NCBI Taxonomy" id="99287"/>
    <lineage>
        <taxon>Bacteria</taxon>
        <taxon>Pseudomonadati</taxon>
        <taxon>Pseudomonadota</taxon>
        <taxon>Gammaproteobacteria</taxon>
        <taxon>Enterobacterales</taxon>
        <taxon>Enterobacteriaceae</taxon>
        <taxon>Salmonella</taxon>
    </lineage>
</organism>
<reference key="1">
    <citation type="journal article" date="2001" name="Nature">
        <title>Complete genome sequence of Salmonella enterica serovar Typhimurium LT2.</title>
        <authorList>
            <person name="McClelland M."/>
            <person name="Sanderson K.E."/>
            <person name="Spieth J."/>
            <person name="Clifton S.W."/>
            <person name="Latreille P."/>
            <person name="Courtney L."/>
            <person name="Porwollik S."/>
            <person name="Ali J."/>
            <person name="Dante M."/>
            <person name="Du F."/>
            <person name="Hou S."/>
            <person name="Layman D."/>
            <person name="Leonard S."/>
            <person name="Nguyen C."/>
            <person name="Scott K."/>
            <person name="Holmes A."/>
            <person name="Grewal N."/>
            <person name="Mulvaney E."/>
            <person name="Ryan E."/>
            <person name="Sun H."/>
            <person name="Florea L."/>
            <person name="Miller W."/>
            <person name="Stoneking T."/>
            <person name="Nhan M."/>
            <person name="Waterston R."/>
            <person name="Wilson R.K."/>
        </authorList>
    </citation>
    <scope>NUCLEOTIDE SEQUENCE [LARGE SCALE GENOMIC DNA]</scope>
    <source>
        <strain>LT2 / SGSC1412 / ATCC 700720</strain>
    </source>
</reference>
<accession>P67520</accession>
<accession>Q8XF27</accession>
<protein>
    <recommendedName>
        <fullName evidence="1">Ribosomal RNA large subunit methyltransferase H</fullName>
        <ecNumber evidence="1">2.1.1.177</ecNumber>
    </recommendedName>
    <alternativeName>
        <fullName evidence="1">23S rRNA (pseudouridine1915-N3)-methyltransferase</fullName>
    </alternativeName>
    <alternativeName>
        <fullName evidence="1">23S rRNA m3Psi1915 methyltransferase</fullName>
    </alternativeName>
    <alternativeName>
        <fullName evidence="1">rRNA (pseudouridine-N3-)-methyltransferase RlmH</fullName>
    </alternativeName>
</protein>
<dbReference type="EC" id="2.1.1.177" evidence="1"/>
<dbReference type="EMBL" id="AE006468">
    <property type="protein sequence ID" value="AAL19592.1"/>
    <property type="molecule type" value="Genomic_DNA"/>
</dbReference>
<dbReference type="RefSeq" id="WP_000776107.1">
    <property type="nucleotide sequence ID" value="NC_003197.2"/>
</dbReference>
<dbReference type="SMR" id="P67520"/>
<dbReference type="STRING" id="99287.STM0641"/>
<dbReference type="PaxDb" id="99287-STM0641"/>
<dbReference type="GeneID" id="66755108"/>
<dbReference type="KEGG" id="stm:STM0641"/>
<dbReference type="PATRIC" id="fig|99287.12.peg.676"/>
<dbReference type="HOGENOM" id="CLU_100552_1_0_6"/>
<dbReference type="OMA" id="NEPYHHQ"/>
<dbReference type="PhylomeDB" id="P67520"/>
<dbReference type="BioCyc" id="SENT99287:STM0641-MONOMER"/>
<dbReference type="Proteomes" id="UP000001014">
    <property type="component" value="Chromosome"/>
</dbReference>
<dbReference type="GO" id="GO:0005737">
    <property type="term" value="C:cytoplasm"/>
    <property type="evidence" value="ECO:0007669"/>
    <property type="project" value="UniProtKB-SubCell"/>
</dbReference>
<dbReference type="GO" id="GO:0070038">
    <property type="term" value="F:rRNA (pseudouridine-N3-)-methyltransferase activity"/>
    <property type="evidence" value="ECO:0007669"/>
    <property type="project" value="UniProtKB-UniRule"/>
</dbReference>
<dbReference type="CDD" id="cd18081">
    <property type="entry name" value="RlmH-like"/>
    <property type="match status" value="1"/>
</dbReference>
<dbReference type="FunFam" id="3.40.1280.10:FF:000004">
    <property type="entry name" value="Ribosomal RNA large subunit methyltransferase H"/>
    <property type="match status" value="1"/>
</dbReference>
<dbReference type="Gene3D" id="3.40.1280.10">
    <property type="match status" value="1"/>
</dbReference>
<dbReference type="HAMAP" id="MF_00658">
    <property type="entry name" value="23SrRNA_methyltr_H"/>
    <property type="match status" value="1"/>
</dbReference>
<dbReference type="InterPro" id="IPR029028">
    <property type="entry name" value="Alpha/beta_knot_MTases"/>
</dbReference>
<dbReference type="InterPro" id="IPR003742">
    <property type="entry name" value="RlmH-like"/>
</dbReference>
<dbReference type="InterPro" id="IPR029026">
    <property type="entry name" value="tRNA_m1G_MTases_N"/>
</dbReference>
<dbReference type="NCBIfam" id="NF000984">
    <property type="entry name" value="PRK00103.1-1"/>
    <property type="match status" value="1"/>
</dbReference>
<dbReference type="NCBIfam" id="NF000986">
    <property type="entry name" value="PRK00103.1-4"/>
    <property type="match status" value="1"/>
</dbReference>
<dbReference type="NCBIfam" id="TIGR00246">
    <property type="entry name" value="tRNA_RlmH_YbeA"/>
    <property type="match status" value="1"/>
</dbReference>
<dbReference type="PANTHER" id="PTHR33603">
    <property type="entry name" value="METHYLTRANSFERASE"/>
    <property type="match status" value="1"/>
</dbReference>
<dbReference type="PANTHER" id="PTHR33603:SF1">
    <property type="entry name" value="RIBOSOMAL RNA LARGE SUBUNIT METHYLTRANSFERASE H"/>
    <property type="match status" value="1"/>
</dbReference>
<dbReference type="Pfam" id="PF02590">
    <property type="entry name" value="SPOUT_MTase"/>
    <property type="match status" value="1"/>
</dbReference>
<dbReference type="PIRSF" id="PIRSF004505">
    <property type="entry name" value="MT_bac"/>
    <property type="match status" value="1"/>
</dbReference>
<dbReference type="SUPFAM" id="SSF75217">
    <property type="entry name" value="alpha/beta knot"/>
    <property type="match status" value="1"/>
</dbReference>
<feature type="chain" id="PRO_0000198173" description="Ribosomal RNA large subunit methyltransferase H">
    <location>
        <begin position="1"/>
        <end position="155"/>
    </location>
</feature>
<feature type="binding site" evidence="1">
    <location>
        <position position="72"/>
    </location>
    <ligand>
        <name>S-adenosyl-L-methionine</name>
        <dbReference type="ChEBI" id="CHEBI:59789"/>
    </ligand>
</feature>
<feature type="binding site" evidence="1">
    <location>
        <position position="103"/>
    </location>
    <ligand>
        <name>S-adenosyl-L-methionine</name>
        <dbReference type="ChEBI" id="CHEBI:59789"/>
    </ligand>
</feature>
<feature type="binding site" evidence="1">
    <location>
        <begin position="122"/>
        <end position="127"/>
    </location>
    <ligand>
        <name>S-adenosyl-L-methionine</name>
        <dbReference type="ChEBI" id="CHEBI:59789"/>
    </ligand>
</feature>
<name>RLMH_SALTY</name>
<sequence length="155" mass="17399">MKLQLVAVGTKMPDWVQTGFTEYLRRFPKDMPFELIEIPAGKRGKNADIKRILDKEGEQMLAAAGKNRIVTLDIPGKPWDTPQLANELERWKQDGRDVSLLIGGPEGLSPACKAAAEQSWSLSALTLPHPLVRVLVAESLYRAWSITTNHPYHRE</sequence>
<proteinExistence type="inferred from homology"/>